<feature type="chain" id="PRO_0000121232" description="Ras-related protein Rab-31">
    <location>
        <begin position="1"/>
        <end position="195"/>
    </location>
</feature>
<feature type="short sequence motif" description="Switch 1" evidence="2">
    <location>
        <begin position="30"/>
        <end position="42"/>
    </location>
</feature>
<feature type="short sequence motif" description="Switch 2" evidence="2">
    <location>
        <begin position="63"/>
        <end position="79"/>
    </location>
</feature>
<feature type="binding site" evidence="13 15">
    <location>
        <position position="16"/>
    </location>
    <ligand>
        <name>GTP</name>
        <dbReference type="ChEBI" id="CHEBI:37565"/>
    </ligand>
</feature>
<feature type="binding site" evidence="13 15">
    <location>
        <position position="18"/>
    </location>
    <ligand>
        <name>GTP</name>
        <dbReference type="ChEBI" id="CHEBI:37565"/>
    </ligand>
</feature>
<feature type="binding site" evidence="13 15">
    <location>
        <position position="19"/>
    </location>
    <ligand>
        <name>GTP</name>
        <dbReference type="ChEBI" id="CHEBI:37565"/>
    </ligand>
</feature>
<feature type="binding site" evidence="13 15">
    <location>
        <position position="20"/>
    </location>
    <ligand>
        <name>GTP</name>
        <dbReference type="ChEBI" id="CHEBI:37565"/>
    </ligand>
</feature>
<feature type="binding site" evidence="10 15">
    <location>
        <position position="20"/>
    </location>
    <ligand>
        <name>Mg(2+)</name>
        <dbReference type="ChEBI" id="CHEBI:18420"/>
    </ligand>
</feature>
<feature type="binding site" evidence="13 15">
    <location>
        <position position="21"/>
    </location>
    <ligand>
        <name>GTP</name>
        <dbReference type="ChEBI" id="CHEBI:37565"/>
    </ligand>
</feature>
<feature type="binding site" evidence="13 15">
    <location>
        <position position="32"/>
    </location>
    <ligand>
        <name>GTP</name>
        <dbReference type="ChEBI" id="CHEBI:37565"/>
    </ligand>
</feature>
<feature type="binding site" evidence="13 15">
    <location>
        <position position="33"/>
    </location>
    <ligand>
        <name>GTP</name>
        <dbReference type="ChEBI" id="CHEBI:37565"/>
    </ligand>
</feature>
<feature type="binding site" evidence="13 15">
    <location>
        <position position="38"/>
    </location>
    <ligand>
        <name>GTP</name>
        <dbReference type="ChEBI" id="CHEBI:37565"/>
    </ligand>
</feature>
<feature type="binding site" evidence="10 15">
    <location>
        <position position="38"/>
    </location>
    <ligand>
        <name>Mg(2+)</name>
        <dbReference type="ChEBI" id="CHEBI:18420"/>
    </ligand>
</feature>
<feature type="binding site" evidence="13 15">
    <location>
        <position position="64"/>
    </location>
    <ligand>
        <name>GTP</name>
        <dbReference type="ChEBI" id="CHEBI:37565"/>
    </ligand>
</feature>
<feature type="binding site" evidence="13 15">
    <location>
        <position position="119"/>
    </location>
    <ligand>
        <name>GTP</name>
        <dbReference type="ChEBI" id="CHEBI:37565"/>
    </ligand>
</feature>
<feature type="binding site" evidence="13 15">
    <location>
        <position position="122"/>
    </location>
    <ligand>
        <name>GTP</name>
        <dbReference type="ChEBI" id="CHEBI:37565"/>
    </ligand>
</feature>
<feature type="binding site" evidence="13 15">
    <location>
        <position position="150"/>
    </location>
    <ligand>
        <name>GTP</name>
        <dbReference type="ChEBI" id="CHEBI:37565"/>
    </ligand>
</feature>
<feature type="binding site" evidence="13 15">
    <location>
        <position position="151"/>
    </location>
    <ligand>
        <name>GTP</name>
        <dbReference type="ChEBI" id="CHEBI:37565"/>
    </ligand>
</feature>
<feature type="modified residue" description="Phosphoserine" evidence="16 17">
    <location>
        <position position="36"/>
    </location>
</feature>
<feature type="lipid moiety-binding region" description="S-geranylgeranyl cysteine" evidence="1">
    <location>
        <position position="194"/>
    </location>
</feature>
<feature type="lipid moiety-binding region" description="S-geranylgeranyl cysteine" evidence="1">
    <location>
        <position position="195"/>
    </location>
</feature>
<feature type="mutagenesis site" description="No change in GTPase activity." evidence="4">
    <original>Q</original>
    <variation>L</variation>
    <location>
        <position position="65"/>
    </location>
</feature>
<feature type="sequence conflict" description="In Ref. 1; AAC50773." evidence="11" ref="1">
    <original>A</original>
    <variation>S</variation>
    <location>
        <position position="190"/>
    </location>
</feature>
<feature type="strand" evidence="18">
    <location>
        <begin position="5"/>
        <end position="13"/>
    </location>
</feature>
<feature type="helix" evidence="18">
    <location>
        <begin position="19"/>
        <end position="28"/>
    </location>
</feature>
<feature type="strand" evidence="18">
    <location>
        <begin position="39"/>
        <end position="49"/>
    </location>
</feature>
<feature type="strand" evidence="18">
    <location>
        <begin position="51"/>
        <end position="62"/>
    </location>
</feature>
<feature type="helix" evidence="18">
    <location>
        <begin position="66"/>
        <end position="72"/>
    </location>
</feature>
<feature type="helix" evidence="18">
    <location>
        <begin position="73"/>
        <end position="76"/>
    </location>
</feature>
<feature type="strand" evidence="18">
    <location>
        <begin position="80"/>
        <end position="87"/>
    </location>
</feature>
<feature type="helix" evidence="18">
    <location>
        <begin position="92"/>
        <end position="107"/>
    </location>
</feature>
<feature type="strand" evidence="18">
    <location>
        <begin position="113"/>
        <end position="119"/>
    </location>
</feature>
<feature type="helix" evidence="18">
    <location>
        <begin position="121"/>
        <end position="126"/>
    </location>
</feature>
<feature type="helix" evidence="18">
    <location>
        <begin position="131"/>
        <end position="139"/>
    </location>
</feature>
<feature type="turn" evidence="18">
    <location>
        <begin position="140"/>
        <end position="142"/>
    </location>
</feature>
<feature type="strand" evidence="18">
    <location>
        <begin position="144"/>
        <end position="147"/>
    </location>
</feature>
<feature type="turn" evidence="18">
    <location>
        <begin position="150"/>
        <end position="153"/>
    </location>
</feature>
<feature type="helix" evidence="18">
    <location>
        <begin position="156"/>
        <end position="165"/>
    </location>
</feature>
<reference key="1">
    <citation type="journal article" date="1996" name="Gene">
        <title>Molecular cloning of two novel rab genes from human melanocytes.</title>
        <authorList>
            <person name="Chen D."/>
            <person name="Guo J."/>
            <person name="Miki T."/>
            <person name="Tachibana M."/>
            <person name="Gahl W.A."/>
        </authorList>
    </citation>
    <scope>NUCLEOTIDE SEQUENCE [MRNA]</scope>
    <source>
        <tissue>Melanocyte</tissue>
    </source>
</reference>
<reference key="2">
    <citation type="journal article" date="2002" name="Eur. J. Biochem.">
        <title>Molecular cloning, bacterial expression and properties of Rab31 and Rab32.</title>
        <authorList>
            <person name="Bao X."/>
            <person name="Faris A.E."/>
            <person name="Jang E.K."/>
            <person name="Haslam R.J."/>
        </authorList>
    </citation>
    <scope>NUCLEOTIDE SEQUENCE [MRNA]</scope>
    <scope>TISSUE SPECIFICITY</scope>
    <scope>MUTAGENESIS OF GLN-65</scope>
    <scope>CATALYTIC ACTIVITY</scope>
    <scope>FUNCTION</scope>
    <source>
        <tissue>Platelet</tissue>
    </source>
</reference>
<reference key="3">
    <citation type="submission" date="2000-02" db="EMBL/GenBank/DDBJ databases">
        <title>Small GTPase Rab22B is expressed in intestinal epithelial Caco-2 cells.</title>
        <authorList>
            <person name="Opdam F.J.M."/>
            <person name="van den Vorstenbosch R."/>
            <person name="Booltink E."/>
            <person name="Fransen J.A.M."/>
        </authorList>
    </citation>
    <scope>NUCLEOTIDE SEQUENCE [MRNA]</scope>
</reference>
<reference key="4">
    <citation type="submission" date="1999-09" db="EMBL/GenBank/DDBJ databases">
        <title>A novel gene expressed in human pheochromocytoma.</title>
        <authorList>
            <person name="Peng Y."/>
            <person name="Gu Y."/>
            <person name="Tu Y."/>
            <person name="Xu S."/>
            <person name="Han Z."/>
            <person name="Fu G."/>
            <person name="Chen Z."/>
        </authorList>
    </citation>
    <scope>NUCLEOTIDE SEQUENCE [LARGE SCALE MRNA]</scope>
    <source>
        <tissue>Pheochromocytoma</tissue>
    </source>
</reference>
<reference key="5">
    <citation type="submission" date="2002-04" db="EMBL/GenBank/DDBJ databases">
        <title>cDNA clones of human proteins involved in signal transduction sequenced by the Guthrie cDNA resource center (www.cdna.org).</title>
        <authorList>
            <person name="Puhl H.L. III"/>
            <person name="Ikeda S.R."/>
            <person name="Aronstam R.S."/>
        </authorList>
    </citation>
    <scope>NUCLEOTIDE SEQUENCE [LARGE SCALE MRNA]</scope>
    <source>
        <tissue>Brain</tissue>
    </source>
</reference>
<reference key="6">
    <citation type="journal article" date="2004" name="Nat. Genet.">
        <title>Complete sequencing and characterization of 21,243 full-length human cDNAs.</title>
        <authorList>
            <person name="Ota T."/>
            <person name="Suzuki Y."/>
            <person name="Nishikawa T."/>
            <person name="Otsuki T."/>
            <person name="Sugiyama T."/>
            <person name="Irie R."/>
            <person name="Wakamatsu A."/>
            <person name="Hayashi K."/>
            <person name="Sato H."/>
            <person name="Nagai K."/>
            <person name="Kimura K."/>
            <person name="Makita H."/>
            <person name="Sekine M."/>
            <person name="Obayashi M."/>
            <person name="Nishi T."/>
            <person name="Shibahara T."/>
            <person name="Tanaka T."/>
            <person name="Ishii S."/>
            <person name="Yamamoto J."/>
            <person name="Saito K."/>
            <person name="Kawai Y."/>
            <person name="Isono Y."/>
            <person name="Nakamura Y."/>
            <person name="Nagahari K."/>
            <person name="Murakami K."/>
            <person name="Yasuda T."/>
            <person name="Iwayanagi T."/>
            <person name="Wagatsuma M."/>
            <person name="Shiratori A."/>
            <person name="Sudo H."/>
            <person name="Hosoiri T."/>
            <person name="Kaku Y."/>
            <person name="Kodaira H."/>
            <person name="Kondo H."/>
            <person name="Sugawara M."/>
            <person name="Takahashi M."/>
            <person name="Kanda K."/>
            <person name="Yokoi T."/>
            <person name="Furuya T."/>
            <person name="Kikkawa E."/>
            <person name="Omura Y."/>
            <person name="Abe K."/>
            <person name="Kamihara K."/>
            <person name="Katsuta N."/>
            <person name="Sato K."/>
            <person name="Tanikawa M."/>
            <person name="Yamazaki M."/>
            <person name="Ninomiya K."/>
            <person name="Ishibashi T."/>
            <person name="Yamashita H."/>
            <person name="Murakawa K."/>
            <person name="Fujimori K."/>
            <person name="Tanai H."/>
            <person name="Kimata M."/>
            <person name="Watanabe M."/>
            <person name="Hiraoka S."/>
            <person name="Chiba Y."/>
            <person name="Ishida S."/>
            <person name="Ono Y."/>
            <person name="Takiguchi S."/>
            <person name="Watanabe S."/>
            <person name="Yosida M."/>
            <person name="Hotuta T."/>
            <person name="Kusano J."/>
            <person name="Kanehori K."/>
            <person name="Takahashi-Fujii A."/>
            <person name="Hara H."/>
            <person name="Tanase T.-O."/>
            <person name="Nomura Y."/>
            <person name="Togiya S."/>
            <person name="Komai F."/>
            <person name="Hara R."/>
            <person name="Takeuchi K."/>
            <person name="Arita M."/>
            <person name="Imose N."/>
            <person name="Musashino K."/>
            <person name="Yuuki H."/>
            <person name="Oshima A."/>
            <person name="Sasaki N."/>
            <person name="Aotsuka S."/>
            <person name="Yoshikawa Y."/>
            <person name="Matsunawa H."/>
            <person name="Ichihara T."/>
            <person name="Shiohata N."/>
            <person name="Sano S."/>
            <person name="Moriya S."/>
            <person name="Momiyama H."/>
            <person name="Satoh N."/>
            <person name="Takami S."/>
            <person name="Terashima Y."/>
            <person name="Suzuki O."/>
            <person name="Nakagawa S."/>
            <person name="Senoh A."/>
            <person name="Mizoguchi H."/>
            <person name="Goto Y."/>
            <person name="Shimizu F."/>
            <person name="Wakebe H."/>
            <person name="Hishigaki H."/>
            <person name="Watanabe T."/>
            <person name="Sugiyama A."/>
            <person name="Takemoto M."/>
            <person name="Kawakami B."/>
            <person name="Yamazaki M."/>
            <person name="Watanabe K."/>
            <person name="Kumagai A."/>
            <person name="Itakura S."/>
            <person name="Fukuzumi Y."/>
            <person name="Fujimori Y."/>
            <person name="Komiyama M."/>
            <person name="Tashiro H."/>
            <person name="Tanigami A."/>
            <person name="Fujiwara T."/>
            <person name="Ono T."/>
            <person name="Yamada K."/>
            <person name="Fujii Y."/>
            <person name="Ozaki K."/>
            <person name="Hirao M."/>
            <person name="Ohmori Y."/>
            <person name="Kawabata A."/>
            <person name="Hikiji T."/>
            <person name="Kobatake N."/>
            <person name="Inagaki H."/>
            <person name="Ikema Y."/>
            <person name="Okamoto S."/>
            <person name="Okitani R."/>
            <person name="Kawakami T."/>
            <person name="Noguchi S."/>
            <person name="Itoh T."/>
            <person name="Shigeta K."/>
            <person name="Senba T."/>
            <person name="Matsumura K."/>
            <person name="Nakajima Y."/>
            <person name="Mizuno T."/>
            <person name="Morinaga M."/>
            <person name="Sasaki M."/>
            <person name="Togashi T."/>
            <person name="Oyama M."/>
            <person name="Hata H."/>
            <person name="Watanabe M."/>
            <person name="Komatsu T."/>
            <person name="Mizushima-Sugano J."/>
            <person name="Satoh T."/>
            <person name="Shirai Y."/>
            <person name="Takahashi Y."/>
            <person name="Nakagawa K."/>
            <person name="Okumura K."/>
            <person name="Nagase T."/>
            <person name="Nomura N."/>
            <person name="Kikuchi H."/>
            <person name="Masuho Y."/>
            <person name="Yamashita R."/>
            <person name="Nakai K."/>
            <person name="Yada T."/>
            <person name="Nakamura Y."/>
            <person name="Ohara O."/>
            <person name="Isogai T."/>
            <person name="Sugano S."/>
        </authorList>
    </citation>
    <scope>NUCLEOTIDE SEQUENCE [LARGE SCALE MRNA]</scope>
</reference>
<reference key="7">
    <citation type="submission" date="2004-10" db="EMBL/GenBank/DDBJ databases">
        <title>Cloning of human full-length CDSs in BD Creator(TM) system donor vector.</title>
        <authorList>
            <person name="Kalnine N."/>
            <person name="Chen X."/>
            <person name="Rolfs A."/>
            <person name="Halleck A."/>
            <person name="Hines L."/>
            <person name="Eisenstein S."/>
            <person name="Koundinya M."/>
            <person name="Raphael J."/>
            <person name="Moreira D."/>
            <person name="Kelley T."/>
            <person name="LaBaer J."/>
            <person name="Lin Y."/>
            <person name="Phelan M."/>
            <person name="Farmer A."/>
        </authorList>
    </citation>
    <scope>NUCLEOTIDE SEQUENCE [LARGE SCALE MRNA]</scope>
</reference>
<reference key="8">
    <citation type="submission" date="2004-05" db="EMBL/GenBank/DDBJ databases">
        <title>Cloning of human full open reading frames in Gateway(TM) system entry vector (pDONR201).</title>
        <authorList>
            <person name="Ebert L."/>
            <person name="Schick M."/>
            <person name="Neubert P."/>
            <person name="Schatten R."/>
            <person name="Henze S."/>
            <person name="Korn B."/>
        </authorList>
    </citation>
    <scope>NUCLEOTIDE SEQUENCE [LARGE SCALE MRNA]</scope>
</reference>
<reference key="9">
    <citation type="journal article" date="2005" name="Nature">
        <title>DNA sequence and analysis of human chromosome 18.</title>
        <authorList>
            <person name="Nusbaum C."/>
            <person name="Zody M.C."/>
            <person name="Borowsky M.L."/>
            <person name="Kamal M."/>
            <person name="Kodira C.D."/>
            <person name="Taylor T.D."/>
            <person name="Whittaker C.A."/>
            <person name="Chang J.L."/>
            <person name="Cuomo C.A."/>
            <person name="Dewar K."/>
            <person name="FitzGerald M.G."/>
            <person name="Yang X."/>
            <person name="Abouelleil A."/>
            <person name="Allen N.R."/>
            <person name="Anderson S."/>
            <person name="Bloom T."/>
            <person name="Bugalter B."/>
            <person name="Butler J."/>
            <person name="Cook A."/>
            <person name="DeCaprio D."/>
            <person name="Engels R."/>
            <person name="Garber M."/>
            <person name="Gnirke A."/>
            <person name="Hafez N."/>
            <person name="Hall J.L."/>
            <person name="Norman C.H."/>
            <person name="Itoh T."/>
            <person name="Jaffe D.B."/>
            <person name="Kuroki Y."/>
            <person name="Lehoczky J."/>
            <person name="Lui A."/>
            <person name="Macdonald P."/>
            <person name="Mauceli E."/>
            <person name="Mikkelsen T.S."/>
            <person name="Naylor J.W."/>
            <person name="Nicol R."/>
            <person name="Nguyen C."/>
            <person name="Noguchi H."/>
            <person name="O'Leary S.B."/>
            <person name="Piqani B."/>
            <person name="Smith C.L."/>
            <person name="Talamas J.A."/>
            <person name="Topham K."/>
            <person name="Totoki Y."/>
            <person name="Toyoda A."/>
            <person name="Wain H.M."/>
            <person name="Young S.K."/>
            <person name="Zeng Q."/>
            <person name="Zimmer A.R."/>
            <person name="Fujiyama A."/>
            <person name="Hattori M."/>
            <person name="Birren B.W."/>
            <person name="Sakaki Y."/>
            <person name="Lander E.S."/>
        </authorList>
    </citation>
    <scope>NUCLEOTIDE SEQUENCE [LARGE SCALE GENOMIC DNA]</scope>
</reference>
<reference key="10">
    <citation type="journal article" date="2004" name="Genome Res.">
        <title>The status, quality, and expansion of the NIH full-length cDNA project: the Mammalian Gene Collection (MGC).</title>
        <authorList>
            <consortium name="The MGC Project Team"/>
        </authorList>
    </citation>
    <scope>NUCLEOTIDE SEQUENCE [LARGE SCALE MRNA]</scope>
    <source>
        <tissue>Lung</tissue>
    </source>
</reference>
<reference key="11">
    <citation type="journal article" date="2006" name="Cell">
        <title>Global, in vivo, and site-specific phosphorylation dynamics in signaling networks.</title>
        <authorList>
            <person name="Olsen J.V."/>
            <person name="Blagoev B."/>
            <person name="Gnad F."/>
            <person name="Macek B."/>
            <person name="Kumar C."/>
            <person name="Mortensen P."/>
            <person name="Mann M."/>
        </authorList>
    </citation>
    <scope>IDENTIFICATION BY MASS SPECTROMETRY [LARGE SCALE ANALYSIS]</scope>
    <source>
        <tissue>Cervix carcinoma</tissue>
    </source>
</reference>
<reference key="12">
    <citation type="journal article" date="2007" name="Biochem. Biophys. Res. Commun.">
        <title>Rab22B's role in trans-Golgi network membrane dynamics.</title>
        <authorList>
            <person name="Ng E.L."/>
            <person name="Wang Y."/>
            <person name="Tang B.L."/>
        </authorList>
    </citation>
    <scope>FUNCTION</scope>
    <scope>SUBCELLULAR LOCATION</scope>
</reference>
<reference key="13">
    <citation type="journal article" date="2007" name="Cell Metab.">
        <title>Gapex-5, a Rab31 guanine nucleotide exchange factor that regulates Glut4 trafficking in adipocytes.</title>
        <authorList>
            <person name="Lodhi I.J."/>
            <person name="Chiang S.-H."/>
            <person name="Chang L."/>
            <person name="Vollenweider D."/>
            <person name="Watson R.T."/>
            <person name="Inoue M."/>
            <person name="Pessin J.E."/>
            <person name="Saltiel A.R."/>
        </authorList>
    </citation>
    <scope>FUNCTION</scope>
    <scope>INTERACTION WITH GAPVD1 AND EEA1</scope>
    <scope>SUBCELLULAR LOCATION</scope>
    <scope>ACTIVITY REGULATION</scope>
</reference>
<reference key="14">
    <citation type="journal article" date="2008" name="Proc. Natl. Acad. Sci. U.S.A.">
        <title>A quantitative atlas of mitotic phosphorylation.</title>
        <authorList>
            <person name="Dephoure N."/>
            <person name="Zhou C."/>
            <person name="Villen J."/>
            <person name="Beausoleil S.A."/>
            <person name="Bakalarski C.E."/>
            <person name="Elledge S.J."/>
            <person name="Gygi S.P."/>
        </authorList>
    </citation>
    <scope>PHOSPHORYLATION [LARGE SCALE ANALYSIS] AT SER-36</scope>
    <scope>IDENTIFICATION BY MASS SPECTROMETRY [LARGE SCALE ANALYSIS]</scope>
    <source>
        <tissue>Cervix carcinoma</tissue>
    </source>
</reference>
<reference key="15">
    <citation type="journal article" date="2009" name="J. Cell. Physiol.">
        <title>Rab22B is expressed in the CNS astroglia lineage and plays a role in epidermal growth factor receptor trafficking in A431 cells.</title>
        <authorList>
            <person name="Ng E.L."/>
            <person name="Ng J.J."/>
            <person name="Liang F."/>
            <person name="Tang B.L."/>
        </authorList>
    </citation>
    <scope>FUNCTION</scope>
    <scope>SUBCELLULAR LOCATION</scope>
    <scope>INTERACTION WITH EGFR AND EEA1</scope>
</reference>
<reference key="16">
    <citation type="journal article" date="2011" name="BMC Syst. Biol.">
        <title>Initial characterization of the human central proteome.</title>
        <authorList>
            <person name="Burkard T.R."/>
            <person name="Planyavsky M."/>
            <person name="Kaupe I."/>
            <person name="Breitwieser F.P."/>
            <person name="Buerckstuemmer T."/>
            <person name="Bennett K.L."/>
            <person name="Superti-Furga G."/>
            <person name="Colinge J."/>
        </authorList>
    </citation>
    <scope>IDENTIFICATION BY MASS SPECTROMETRY [LARGE SCALE ANALYSIS]</scope>
</reference>
<reference key="17">
    <citation type="journal article" date="2011" name="J. Biol. Chem.">
        <title>Characterization of RIN3 as a guanine nucleotide exchange factor for the Rab5 subfamily GTPase Rab31.</title>
        <authorList>
            <person name="Kajiho H."/>
            <person name="Sakurai K."/>
            <person name="Minoda T."/>
            <person name="Yoshikawa M."/>
            <person name="Nakagawa S."/>
            <person name="Fukushima S."/>
            <person name="Kontani K."/>
            <person name="Katada T."/>
        </authorList>
    </citation>
    <scope>FUNCTION</scope>
    <scope>SUBCELLULAR LOCATION</scope>
    <scope>INTERACTION WITH RIN3</scope>
    <scope>ACTIVITY REGULATION</scope>
</reference>
<reference key="18">
    <citation type="journal article" date="2011" name="Traffic">
        <title>Rab GTPases regulating phagosome maturation are differentially recruited to mycobacterial phagosomes.</title>
        <authorList>
            <person name="Seto S."/>
            <person name="Tsujimura K."/>
            <person name="Koide Y."/>
        </authorList>
    </citation>
    <scope>FUNCTION</scope>
    <scope>SUBCELLULAR LOCATION</scope>
</reference>
<reference key="19">
    <citation type="journal article" date="2013" name="J. Proteome Res.">
        <title>Toward a comprehensive characterization of a human cancer cell phosphoproteome.</title>
        <authorList>
            <person name="Zhou H."/>
            <person name="Di Palma S."/>
            <person name="Preisinger C."/>
            <person name="Peng M."/>
            <person name="Polat A.N."/>
            <person name="Heck A.J."/>
            <person name="Mohammed S."/>
        </authorList>
    </citation>
    <scope>PHOSPHORYLATION [LARGE SCALE ANALYSIS] AT SER-36</scope>
    <scope>IDENTIFICATION BY MASS SPECTROMETRY [LARGE SCALE ANALYSIS]</scope>
    <source>
        <tissue>Cervix carcinoma</tissue>
        <tissue>Erythroleukemia</tissue>
    </source>
</reference>
<reference key="20">
    <citation type="journal article" date="2015" name="Proteomics">
        <title>N-terminome analysis of the human mitochondrial proteome.</title>
        <authorList>
            <person name="Vaca Jacome A.S."/>
            <person name="Rabilloud T."/>
            <person name="Schaeffer-Reiss C."/>
            <person name="Rompais M."/>
            <person name="Ayoub D."/>
            <person name="Lane L."/>
            <person name="Bairoch A."/>
            <person name="Van Dorsselaer A."/>
            <person name="Carapito C."/>
        </authorList>
    </citation>
    <scope>IDENTIFICATION BY MASS SPECTROMETRY [LARGE SCALE ANALYSIS]</scope>
</reference>
<reference evidence="15" key="21">
    <citation type="submission" date="2009-02" db="PDB data bank">
        <title>Crystal structure of human RAB31 in complex with a GTP analogue.</title>
        <authorList>
            <consortium name="Structural genomics consortium (SGC)"/>
        </authorList>
    </citation>
    <scope>X-RAY CRYSTALLOGRAPHY (2.8 ANGSTROMS) OF 3-175 IN COMPLEX WITH MG(2+) AND GTP ANALOG</scope>
    <scope>COFACTOR</scope>
</reference>
<organism>
    <name type="scientific">Homo sapiens</name>
    <name type="common">Human</name>
    <dbReference type="NCBI Taxonomy" id="9606"/>
    <lineage>
        <taxon>Eukaryota</taxon>
        <taxon>Metazoa</taxon>
        <taxon>Chordata</taxon>
        <taxon>Craniata</taxon>
        <taxon>Vertebrata</taxon>
        <taxon>Euteleostomi</taxon>
        <taxon>Mammalia</taxon>
        <taxon>Eutheria</taxon>
        <taxon>Euarchontoglires</taxon>
        <taxon>Primates</taxon>
        <taxon>Haplorrhini</taxon>
        <taxon>Catarrhini</taxon>
        <taxon>Hominidae</taxon>
        <taxon>Homo</taxon>
    </lineage>
</organism>
<sequence length="195" mass="21700">MMAIRELKVCLLGDTGVGKSSIVCRFVQDHFDHNISPTIGASFMTKTVPCGNELHKFLIWDTAGQERFHSLAPMYYRGSAAAVIVYDITKQDSFYTLKKWVKELKEHGPENIVMAIAGNKCDLSDIREVPLKDAKEYAESIGAIVVETSAKNAINIEELFQGISRQIPPLDPHENGNNGTIKVEKPTMQASRRCC</sequence>
<gene>
    <name evidence="14" type="primary">RAB31</name>
    <name type="synonym">RAB22B</name>
</gene>
<dbReference type="EC" id="3.6.5.2" evidence="4"/>
<dbReference type="EMBL" id="U57091">
    <property type="protein sequence ID" value="AAC50773.1"/>
    <property type="status" value="ALT_INIT"/>
    <property type="molecule type" value="mRNA"/>
</dbReference>
<dbReference type="EMBL" id="U59877">
    <property type="protein sequence ID" value="AAB02832.1"/>
    <property type="status" value="ALT_INIT"/>
    <property type="molecule type" value="mRNA"/>
</dbReference>
<dbReference type="EMBL" id="AF234995">
    <property type="protein sequence ID" value="AAG13847.1"/>
    <property type="status" value="ALT_INIT"/>
    <property type="molecule type" value="mRNA"/>
</dbReference>
<dbReference type="EMBL" id="AF183421">
    <property type="protein sequence ID" value="AAG09690.1"/>
    <property type="molecule type" value="mRNA"/>
</dbReference>
<dbReference type="EMBL" id="AF498957">
    <property type="protein sequence ID" value="AAM21105.1"/>
    <property type="status" value="ALT_INIT"/>
    <property type="molecule type" value="mRNA"/>
</dbReference>
<dbReference type="EMBL" id="AK314809">
    <property type="protein sequence ID" value="BAG37334.1"/>
    <property type="status" value="ALT_INIT"/>
    <property type="molecule type" value="mRNA"/>
</dbReference>
<dbReference type="EMBL" id="BT020027">
    <property type="protein sequence ID" value="AAV38830.1"/>
    <property type="status" value="ALT_INIT"/>
    <property type="molecule type" value="mRNA"/>
</dbReference>
<dbReference type="EMBL" id="BT020028">
    <property type="protein sequence ID" value="AAV38831.1"/>
    <property type="status" value="ALT_INIT"/>
    <property type="molecule type" value="mRNA"/>
</dbReference>
<dbReference type="EMBL" id="CR407659">
    <property type="protein sequence ID" value="CAG28587.1"/>
    <property type="status" value="ALT_INIT"/>
    <property type="molecule type" value="mRNA"/>
</dbReference>
<dbReference type="EMBL" id="AC006238">
    <property type="status" value="NOT_ANNOTATED_CDS"/>
    <property type="molecule type" value="Genomic_DNA"/>
</dbReference>
<dbReference type="EMBL" id="AP000902">
    <property type="status" value="NOT_ANNOTATED_CDS"/>
    <property type="molecule type" value="Genomic_DNA"/>
</dbReference>
<dbReference type="EMBL" id="BC001148">
    <property type="protein sequence ID" value="AAH01148.1"/>
    <property type="molecule type" value="mRNA"/>
</dbReference>
<dbReference type="CCDS" id="CCDS45826.1"/>
<dbReference type="PIR" id="JC4961">
    <property type="entry name" value="JC4961"/>
</dbReference>
<dbReference type="RefSeq" id="NP_006859.2">
    <property type="nucleotide sequence ID" value="NM_006868.3"/>
</dbReference>
<dbReference type="PDB" id="2FG5">
    <property type="method" value="X-ray"/>
    <property type="resolution" value="2.80 A"/>
    <property type="chains" value="A=3-175"/>
</dbReference>
<dbReference type="PDBsum" id="2FG5"/>
<dbReference type="SMR" id="Q13636"/>
<dbReference type="BioGRID" id="116221">
    <property type="interactions" value="49"/>
</dbReference>
<dbReference type="FunCoup" id="Q13636">
    <property type="interactions" value="855"/>
</dbReference>
<dbReference type="IntAct" id="Q13636">
    <property type="interactions" value="23"/>
</dbReference>
<dbReference type="MINT" id="Q13636"/>
<dbReference type="STRING" id="9606.ENSP00000461945"/>
<dbReference type="GlyGen" id="Q13636">
    <property type="glycosylation" value="3 sites, 1 N-linked glycan (1 site), 1 O-linked glycan (1 site)"/>
</dbReference>
<dbReference type="iPTMnet" id="Q13636"/>
<dbReference type="PhosphoSitePlus" id="Q13636"/>
<dbReference type="BioMuta" id="RAB31"/>
<dbReference type="DMDM" id="2500069"/>
<dbReference type="jPOST" id="Q13636"/>
<dbReference type="MassIVE" id="Q13636"/>
<dbReference type="PaxDb" id="9606-ENSP00000461945"/>
<dbReference type="PeptideAtlas" id="Q13636"/>
<dbReference type="ProteomicsDB" id="59631"/>
<dbReference type="Pumba" id="Q13636"/>
<dbReference type="Antibodypedia" id="21931">
    <property type="antibodies" value="188 antibodies from 27 providers"/>
</dbReference>
<dbReference type="DNASU" id="11031"/>
<dbReference type="Ensembl" id="ENST00000578921.6">
    <property type="protein sequence ID" value="ENSP00000461945.2"/>
    <property type="gene ID" value="ENSG00000168461.13"/>
</dbReference>
<dbReference type="GeneID" id="11031"/>
<dbReference type="KEGG" id="hsa:11031"/>
<dbReference type="MANE-Select" id="ENST00000578921.6">
    <property type="protein sequence ID" value="ENSP00000461945.2"/>
    <property type="RefSeq nucleotide sequence ID" value="NM_006868.4"/>
    <property type="RefSeq protein sequence ID" value="NP_006859.2"/>
</dbReference>
<dbReference type="UCSC" id="uc002kog.3">
    <property type="organism name" value="human"/>
</dbReference>
<dbReference type="AGR" id="HGNC:9771"/>
<dbReference type="CTD" id="11031"/>
<dbReference type="DisGeNET" id="11031"/>
<dbReference type="GeneCards" id="RAB31"/>
<dbReference type="HGNC" id="HGNC:9771">
    <property type="gene designation" value="RAB31"/>
</dbReference>
<dbReference type="HPA" id="ENSG00000168461">
    <property type="expression patterns" value="Low tissue specificity"/>
</dbReference>
<dbReference type="MIM" id="605694">
    <property type="type" value="gene"/>
</dbReference>
<dbReference type="neXtProt" id="NX_Q13636"/>
<dbReference type="OpenTargets" id="ENSG00000168461"/>
<dbReference type="PharmGKB" id="PA34122"/>
<dbReference type="VEuPathDB" id="HostDB:ENSG00000168461"/>
<dbReference type="eggNOG" id="KOG0092">
    <property type="taxonomic scope" value="Eukaryota"/>
</dbReference>
<dbReference type="GeneTree" id="ENSGT00940000155702"/>
<dbReference type="HOGENOM" id="CLU_041217_10_2_1"/>
<dbReference type="InParanoid" id="Q13636"/>
<dbReference type="OMA" id="KQDTFHT"/>
<dbReference type="OrthoDB" id="63533at2759"/>
<dbReference type="PAN-GO" id="Q13636">
    <property type="GO annotations" value="5 GO annotations based on evolutionary models"/>
</dbReference>
<dbReference type="PhylomeDB" id="Q13636"/>
<dbReference type="TreeFam" id="TF331262"/>
<dbReference type="PathwayCommons" id="Q13636"/>
<dbReference type="Reactome" id="R-HSA-6798695">
    <property type="pathway name" value="Neutrophil degranulation"/>
</dbReference>
<dbReference type="Reactome" id="R-HSA-8873719">
    <property type="pathway name" value="RAB geranylgeranylation"/>
</dbReference>
<dbReference type="Reactome" id="R-HSA-8876198">
    <property type="pathway name" value="RAB GEFs exchange GTP for GDP on RABs"/>
</dbReference>
<dbReference type="SignaLink" id="Q13636"/>
<dbReference type="BioGRID-ORCS" id="11031">
    <property type="hits" value="11 hits in 1152 CRISPR screens"/>
</dbReference>
<dbReference type="ChiTaRS" id="RAB31">
    <property type="organism name" value="human"/>
</dbReference>
<dbReference type="EvolutionaryTrace" id="Q13636"/>
<dbReference type="GeneWiki" id="RAB31"/>
<dbReference type="GenomeRNAi" id="11031"/>
<dbReference type="Pharos" id="Q13636">
    <property type="development level" value="Tbio"/>
</dbReference>
<dbReference type="PRO" id="PR:Q13636"/>
<dbReference type="Proteomes" id="UP000005640">
    <property type="component" value="Chromosome 18"/>
</dbReference>
<dbReference type="RNAct" id="Q13636">
    <property type="molecule type" value="protein"/>
</dbReference>
<dbReference type="Bgee" id="ENSG00000168461">
    <property type="expression patterns" value="Expressed in dorsal motor nucleus of vagus nerve and 214 other cell types or tissues"/>
</dbReference>
<dbReference type="ExpressionAtlas" id="Q13636">
    <property type="expression patterns" value="baseline and differential"/>
</dbReference>
<dbReference type="GO" id="GO:0005829">
    <property type="term" value="C:cytosol"/>
    <property type="evidence" value="ECO:0000304"/>
    <property type="project" value="Reactome"/>
</dbReference>
<dbReference type="GO" id="GO:0005769">
    <property type="term" value="C:early endosome"/>
    <property type="evidence" value="ECO:0000314"/>
    <property type="project" value="UniProtKB"/>
</dbReference>
<dbReference type="GO" id="GO:0031901">
    <property type="term" value="C:early endosome membrane"/>
    <property type="evidence" value="ECO:0000304"/>
    <property type="project" value="Reactome"/>
</dbReference>
<dbReference type="GO" id="GO:0036186">
    <property type="term" value="C:early phagosome membrane"/>
    <property type="evidence" value="ECO:0000250"/>
    <property type="project" value="UniProtKB"/>
</dbReference>
<dbReference type="GO" id="GO:0012505">
    <property type="term" value="C:endomembrane system"/>
    <property type="evidence" value="ECO:0000318"/>
    <property type="project" value="GO_Central"/>
</dbReference>
<dbReference type="GO" id="GO:0005794">
    <property type="term" value="C:Golgi apparatus"/>
    <property type="evidence" value="ECO:0000314"/>
    <property type="project" value="HPA"/>
</dbReference>
<dbReference type="GO" id="GO:0043231">
    <property type="term" value="C:intracellular membrane-bounded organelle"/>
    <property type="evidence" value="ECO:0000314"/>
    <property type="project" value="HPA"/>
</dbReference>
<dbReference type="GO" id="GO:0005770">
    <property type="term" value="C:late endosome"/>
    <property type="evidence" value="ECO:0007669"/>
    <property type="project" value="Ensembl"/>
</dbReference>
<dbReference type="GO" id="GO:0001891">
    <property type="term" value="C:phagocytic cup"/>
    <property type="evidence" value="ECO:0000250"/>
    <property type="project" value="UniProtKB"/>
</dbReference>
<dbReference type="GO" id="GO:0045335">
    <property type="term" value="C:phagocytic vesicle"/>
    <property type="evidence" value="ECO:0000314"/>
    <property type="project" value="UniProtKB"/>
</dbReference>
<dbReference type="GO" id="GO:0005886">
    <property type="term" value="C:plasma membrane"/>
    <property type="evidence" value="ECO:0000304"/>
    <property type="project" value="Reactome"/>
</dbReference>
<dbReference type="GO" id="GO:0030667">
    <property type="term" value="C:secretory granule membrane"/>
    <property type="evidence" value="ECO:0000304"/>
    <property type="project" value="Reactome"/>
</dbReference>
<dbReference type="GO" id="GO:0032588">
    <property type="term" value="C:trans-Golgi network membrane"/>
    <property type="evidence" value="ECO:0000314"/>
    <property type="project" value="UniProtKB"/>
</dbReference>
<dbReference type="GO" id="GO:0019003">
    <property type="term" value="F:GDP binding"/>
    <property type="evidence" value="ECO:0000314"/>
    <property type="project" value="UniProtKB"/>
</dbReference>
<dbReference type="GO" id="GO:0005525">
    <property type="term" value="F:GTP binding"/>
    <property type="evidence" value="ECO:0000314"/>
    <property type="project" value="UniProtKB"/>
</dbReference>
<dbReference type="GO" id="GO:0003924">
    <property type="term" value="F:GTPase activity"/>
    <property type="evidence" value="ECO:0000314"/>
    <property type="project" value="UniProtKB"/>
</dbReference>
<dbReference type="GO" id="GO:0032869">
    <property type="term" value="P:cellular response to insulin stimulus"/>
    <property type="evidence" value="ECO:0000315"/>
    <property type="project" value="UniProtKB"/>
</dbReference>
<dbReference type="GO" id="GO:0006897">
    <property type="term" value="P:endocytosis"/>
    <property type="evidence" value="ECO:0000318"/>
    <property type="project" value="GO_Central"/>
</dbReference>
<dbReference type="GO" id="GO:0043001">
    <property type="term" value="P:Golgi to plasma membrane protein transport"/>
    <property type="evidence" value="ECO:0000315"/>
    <property type="project" value="UniProtKB"/>
</dbReference>
<dbReference type="GO" id="GO:0006886">
    <property type="term" value="P:intracellular protein transport"/>
    <property type="evidence" value="ECO:0000318"/>
    <property type="project" value="GO_Central"/>
</dbReference>
<dbReference type="GO" id="GO:0090382">
    <property type="term" value="P:phagosome maturation"/>
    <property type="evidence" value="ECO:0000315"/>
    <property type="project" value="UniProtKB"/>
</dbReference>
<dbReference type="GO" id="GO:0060100">
    <property type="term" value="P:positive regulation of phagocytosis, engulfment"/>
    <property type="evidence" value="ECO:0000250"/>
    <property type="project" value="UniProtKB"/>
</dbReference>
<dbReference type="GO" id="GO:0031623">
    <property type="term" value="P:receptor internalization"/>
    <property type="evidence" value="ECO:0000315"/>
    <property type="project" value="UniProtKB"/>
</dbReference>
<dbReference type="GO" id="GO:0045055">
    <property type="term" value="P:regulated exocytosis"/>
    <property type="evidence" value="ECO:0000315"/>
    <property type="project" value="UniProtKB"/>
</dbReference>
<dbReference type="CDD" id="cd01860">
    <property type="entry name" value="Rab5_related"/>
    <property type="match status" value="1"/>
</dbReference>
<dbReference type="FunFam" id="3.40.50.300:FF:000346">
    <property type="entry name" value="RAB31, member RAS oncogene family"/>
    <property type="match status" value="1"/>
</dbReference>
<dbReference type="Gene3D" id="3.40.50.300">
    <property type="entry name" value="P-loop containing nucleotide triphosphate hydrolases"/>
    <property type="match status" value="1"/>
</dbReference>
<dbReference type="InterPro" id="IPR027417">
    <property type="entry name" value="P-loop_NTPase"/>
</dbReference>
<dbReference type="InterPro" id="IPR005225">
    <property type="entry name" value="Small_GTP-bd"/>
</dbReference>
<dbReference type="InterPro" id="IPR001806">
    <property type="entry name" value="Small_GTPase"/>
</dbReference>
<dbReference type="NCBIfam" id="TIGR00231">
    <property type="entry name" value="small_GTP"/>
    <property type="match status" value="1"/>
</dbReference>
<dbReference type="PANTHER" id="PTHR47978">
    <property type="match status" value="1"/>
</dbReference>
<dbReference type="Pfam" id="PF00071">
    <property type="entry name" value="Ras"/>
    <property type="match status" value="1"/>
</dbReference>
<dbReference type="PRINTS" id="PR00449">
    <property type="entry name" value="RASTRNSFRMNG"/>
</dbReference>
<dbReference type="SMART" id="SM00175">
    <property type="entry name" value="RAB"/>
    <property type="match status" value="1"/>
</dbReference>
<dbReference type="SMART" id="SM00176">
    <property type="entry name" value="RAN"/>
    <property type="match status" value="1"/>
</dbReference>
<dbReference type="SMART" id="SM00173">
    <property type="entry name" value="RAS"/>
    <property type="match status" value="1"/>
</dbReference>
<dbReference type="SMART" id="SM00174">
    <property type="entry name" value="RHO"/>
    <property type="match status" value="1"/>
</dbReference>
<dbReference type="SUPFAM" id="SSF52540">
    <property type="entry name" value="P-loop containing nucleoside triphosphate hydrolases"/>
    <property type="match status" value="1"/>
</dbReference>
<dbReference type="PROSITE" id="PS51419">
    <property type="entry name" value="RAB"/>
    <property type="match status" value="1"/>
</dbReference>
<name>RAB31_HUMAN</name>
<comment type="function">
    <text evidence="4 5 6 7 8 9">The small GTPases Rab are key regulators of intracellular membrane trafficking, from the formation of transport vesicles to their fusion with membranes (PubMed:11784320). Rabs cycle between an inactive GDP-bound form and an active GTP-bound form that is able to recruit to membranes different set of downstream effectors directly responsible for vesicle formation, movement, tethering and fusion. Required for the integrity and for normal function of the Golgi apparatus and the trans-Golgi network. Plays a role in insulin-stimulated translocation of GLUT4 to the cell membrane. Plays a role in M6PR transport from the trans-Golgi network to endosomes. Plays a role in the internalization of EGFR from the cell membrane into endosomes. Plays a role in the maturation of phagosomes that engulf pathogens, such as S.aureus and M.tuberculosis.</text>
</comment>
<comment type="catalytic activity">
    <reaction evidence="4">
        <text>GTP + H2O = GDP + phosphate + H(+)</text>
        <dbReference type="Rhea" id="RHEA:19669"/>
        <dbReference type="ChEBI" id="CHEBI:15377"/>
        <dbReference type="ChEBI" id="CHEBI:15378"/>
        <dbReference type="ChEBI" id="CHEBI:37565"/>
        <dbReference type="ChEBI" id="CHEBI:43474"/>
        <dbReference type="ChEBI" id="CHEBI:58189"/>
        <dbReference type="EC" id="3.6.5.2"/>
    </reaction>
    <physiologicalReaction direction="left-to-right" evidence="12">
        <dbReference type="Rhea" id="RHEA:19670"/>
    </physiologicalReaction>
</comment>
<comment type="cofactor">
    <cofactor evidence="10">
        <name>Mg(2+)</name>
        <dbReference type="ChEBI" id="CHEBI:18420"/>
    </cofactor>
</comment>
<comment type="activity regulation">
    <text evidence="5 9 11">Regulated by guanine nucleotide exchange factors (GEFs) including RIN3 and GAPVD1 which promote the exchange of bound GDP for free GTP (PubMed:17189207, PubMed:21586568). Regulated by GTPase activating proteins (GAPs) which increase the GTP hydrolysis activity (Probable). Inhibited by GDP dissociation inhibitors (GDIs) which prevent Rab-GDP dissociation (Probable).</text>
</comment>
<comment type="subunit">
    <text evidence="1 3 5 7 9 10">Interacts with OCRL. Interacts with NGFR (By similarity). Interacts (in GDP-bound form) with RIN3 and GAPVD1, which function as guanine exchange factors (GEF). Interacts (in GTP-bound form) with EEA1. Interacts with EGFR. Interacts (in GTP-bound form) with APPL2; interaction contributes to or enhances recruitment of APPL2 to the phagosomes; interaction enhances Fc-gamma receptor-mediated phagocytosis through PI3K/Akt signaling in macrophages (By similarity).</text>
</comment>
<comment type="interaction">
    <interactant intactId="EBI-725987">
        <id>Q13636</id>
    </interactant>
    <interactant intactId="EBI-12078276">
        <id>Q60I27</id>
        <label>ALS2CL</label>
    </interactant>
    <organismsDiffer>false</organismsDiffer>
    <experiments>3</experiments>
</comment>
<comment type="interaction">
    <interactant intactId="EBI-725987">
        <id>Q13636</id>
    </interactant>
    <interactant intactId="EBI-1049597">
        <id>P27797</id>
        <label>CALR</label>
    </interactant>
    <organismsDiffer>false</organismsDiffer>
    <experiments>3</experiments>
</comment>
<comment type="interaction">
    <interactant intactId="EBI-725987">
        <id>Q13636</id>
    </interactant>
    <interactant intactId="EBI-351007">
        <id>P36957</id>
        <label>DLST</label>
    </interactant>
    <organismsDiffer>false</organismsDiffer>
    <experiments>3</experiments>
</comment>
<comment type="interaction">
    <interactant intactId="EBI-725987">
        <id>Q13636</id>
    </interactant>
    <interactant intactId="EBI-1055945">
        <id>Q8TDX7</id>
        <label>NEK7</label>
    </interactant>
    <organismsDiffer>false</organismsDiffer>
    <experiments>3</experiments>
</comment>
<comment type="subcellular location">
    <subcellularLocation>
        <location evidence="5 6 7 9">Golgi apparatus</location>
        <location evidence="5 6 7 9">trans-Golgi network</location>
    </subcellularLocation>
    <subcellularLocation>
        <location evidence="11">Golgi apparatus</location>
        <location evidence="11">trans-Golgi network membrane</location>
        <topology evidence="11">Lipid-anchor</topology>
        <orientation evidence="11">Cytoplasmic side</orientation>
    </subcellularLocation>
    <subcellularLocation>
        <location evidence="5 9">Early endosome</location>
    </subcellularLocation>
    <subcellularLocation>
        <location evidence="8">Cytoplasmic vesicle</location>
        <location evidence="8">Phagosome</location>
    </subcellularLocation>
    <subcellularLocation>
        <location evidence="11">Cytoplasmic vesicle</location>
        <location evidence="11">Phagosome membrane</location>
        <topology evidence="11">Lipid-anchor</topology>
        <orientation evidence="11">Cytoplasmic side</orientation>
    </subcellularLocation>
    <text evidence="8">Rapidly recruited to phagosomes containing S.aureus or M.tuberculosis (PubMed:21255211).</text>
</comment>
<comment type="tissue specificity">
    <text evidence="4">Highest expression in placenta and brain with lower levels in heart and lung. Not detected in liver, skeletal muscle, kidney or pancreas.</text>
</comment>
<comment type="domain">
    <text evidence="2">Switch 1, switch 2 and the interswitch regions are characteristic of Rab GTPases and mediate the interactions with Rab downstream effectors. The switch regions undergo conformational changes upon nucleotide binding which drive interaction with specific sets of effector proteins, with most effectors only binding to GTP-bound Rab.</text>
</comment>
<comment type="similarity">
    <text evidence="11">Belongs to the small GTPase superfamily. Rab family.</text>
</comment>
<comment type="sequence caution" evidence="11">
    <conflict type="erroneous initiation">
        <sequence resource="EMBL-CDS" id="AAB02832"/>
    </conflict>
    <text>Truncated N-terminus.</text>
</comment>
<comment type="sequence caution" evidence="11">
    <conflict type="erroneous initiation">
        <sequence resource="EMBL-CDS" id="AAC50773"/>
    </conflict>
    <text>Truncated N-terminus.</text>
</comment>
<comment type="sequence caution" evidence="11">
    <conflict type="erroneous initiation">
        <sequence resource="EMBL-CDS" id="AAG13847"/>
    </conflict>
    <text>Truncated N-terminus.</text>
</comment>
<comment type="sequence caution" evidence="11">
    <conflict type="erroneous initiation">
        <sequence resource="EMBL-CDS" id="AAM21105"/>
    </conflict>
    <text>Truncated N-terminus.</text>
</comment>
<comment type="sequence caution" evidence="11">
    <conflict type="erroneous initiation">
        <sequence resource="EMBL-CDS" id="AAV38830"/>
    </conflict>
    <text>Truncated N-terminus.</text>
</comment>
<comment type="sequence caution" evidence="11">
    <conflict type="erroneous initiation">
        <sequence resource="EMBL-CDS" id="AAV38831"/>
    </conflict>
    <text>Truncated N-terminus.</text>
</comment>
<comment type="sequence caution" evidence="11">
    <conflict type="erroneous initiation">
        <sequence resource="EMBL-CDS" id="BAG37334"/>
    </conflict>
    <text>Truncated N-terminus.</text>
</comment>
<comment type="sequence caution" evidence="11">
    <conflict type="erroneous initiation">
        <sequence resource="EMBL-CDS" id="CAG28587"/>
    </conflict>
    <text>Truncated N-terminus.</text>
</comment>
<protein>
    <recommendedName>
        <fullName>Ras-related protein Rab-31</fullName>
        <ecNumber evidence="4">3.6.5.2</ecNumber>
    </recommendedName>
    <alternativeName>
        <fullName>Ras-related protein Rab-22B</fullName>
    </alternativeName>
</protein>
<keyword id="KW-0002">3D-structure</keyword>
<keyword id="KW-0968">Cytoplasmic vesicle</keyword>
<keyword id="KW-0967">Endosome</keyword>
<keyword id="KW-0333">Golgi apparatus</keyword>
<keyword id="KW-0342">GTP-binding</keyword>
<keyword id="KW-0378">Hydrolase</keyword>
<keyword id="KW-0449">Lipoprotein</keyword>
<keyword id="KW-0472">Membrane</keyword>
<keyword id="KW-0547">Nucleotide-binding</keyword>
<keyword id="KW-0597">Phosphoprotein</keyword>
<keyword id="KW-0636">Prenylation</keyword>
<keyword id="KW-1267">Proteomics identification</keyword>
<keyword id="KW-1185">Reference proteome</keyword>
<accession>Q13636</accession>
<accession>B2RBT7</accession>
<accession>Q15770</accession>
<accession>Q9HC00</accession>
<evidence type="ECO:0000250" key="1"/>
<evidence type="ECO:0000250" key="2">
    <source>
        <dbReference type="UniProtKB" id="P20339"/>
    </source>
</evidence>
<evidence type="ECO:0000250" key="3">
    <source>
        <dbReference type="UniProtKB" id="Q921E2"/>
    </source>
</evidence>
<evidence type="ECO:0000269" key="4">
    <source>
    </source>
</evidence>
<evidence type="ECO:0000269" key="5">
    <source>
    </source>
</evidence>
<evidence type="ECO:0000269" key="6">
    <source>
    </source>
</evidence>
<evidence type="ECO:0000269" key="7">
    <source>
    </source>
</evidence>
<evidence type="ECO:0000269" key="8">
    <source>
    </source>
</evidence>
<evidence type="ECO:0000269" key="9">
    <source>
    </source>
</evidence>
<evidence type="ECO:0000269" key="10">
    <source ref="21"/>
</evidence>
<evidence type="ECO:0000305" key="11"/>
<evidence type="ECO:0000305" key="12">
    <source>
    </source>
</evidence>
<evidence type="ECO:0000305" key="13">
    <source ref="21"/>
</evidence>
<evidence type="ECO:0000312" key="14">
    <source>
        <dbReference type="HGNC" id="HGNC:9771"/>
    </source>
</evidence>
<evidence type="ECO:0007744" key="15">
    <source>
        <dbReference type="PDB" id="2FG5"/>
    </source>
</evidence>
<evidence type="ECO:0007744" key="16">
    <source>
    </source>
</evidence>
<evidence type="ECO:0007744" key="17">
    <source>
    </source>
</evidence>
<evidence type="ECO:0007829" key="18">
    <source>
        <dbReference type="PDB" id="2FG5"/>
    </source>
</evidence>
<proteinExistence type="evidence at protein level"/>